<feature type="signal peptide" evidence="2">
    <location>
        <begin position="1"/>
        <end position="22"/>
    </location>
</feature>
<feature type="propeptide" id="PRO_0000444784" evidence="5">
    <location>
        <begin position="23"/>
        <end position="52"/>
    </location>
</feature>
<feature type="peptide" id="PRO_5014432670" description="Conotoxin reg3.14" evidence="5">
    <location>
        <begin position="53"/>
        <end position="68"/>
    </location>
</feature>
<feature type="disulfide bond" evidence="1">
    <location>
        <begin position="53"/>
        <end position="68"/>
    </location>
</feature>
<feature type="disulfide bond" evidence="1">
    <location>
        <begin position="54"/>
        <end position="64"/>
    </location>
</feature>
<feature type="disulfide bond" evidence="1">
    <location>
        <begin position="59"/>
        <end position="67"/>
    </location>
</feature>
<protein>
    <recommendedName>
        <fullName evidence="3">Conotoxin reg3.14</fullName>
        <shortName evidence="6">Rg3.14</shortName>
    </recommendedName>
</protein>
<name>CM314_CONRE</name>
<sequence length="68" mass="7655">MMSKLGVLLTICLLLFPLSVLPLDGDQPADQPAERMQDISAEQNPWFDPVKRCCNWPRCNVYLCGPCC</sequence>
<keyword id="KW-0165">Cleavage on pair of basic residues</keyword>
<keyword id="KW-1015">Disulfide bond</keyword>
<keyword id="KW-0964">Secreted</keyword>
<keyword id="KW-0732">Signal</keyword>
<keyword id="KW-0800">Toxin</keyword>
<organism>
    <name type="scientific">Conus regius</name>
    <name type="common">Crown cone</name>
    <dbReference type="NCBI Taxonomy" id="101314"/>
    <lineage>
        <taxon>Eukaryota</taxon>
        <taxon>Metazoa</taxon>
        <taxon>Spiralia</taxon>
        <taxon>Lophotrochozoa</taxon>
        <taxon>Mollusca</taxon>
        <taxon>Gastropoda</taxon>
        <taxon>Caenogastropoda</taxon>
        <taxon>Neogastropoda</taxon>
        <taxon>Conoidea</taxon>
        <taxon>Conidae</taxon>
        <taxon>Conus</taxon>
        <taxon>Stephanoconus</taxon>
    </lineage>
</organism>
<accession>A0A2I6EDN1</accession>
<reference key="1">
    <citation type="journal article" date="2017" name="FEBS J.">
        <title>Structural plasticity of Mini-M conotoxins: expression of all mini-M subtypes by Conus regius.</title>
        <authorList>
            <person name="Franco A."/>
            <person name="Dovell S."/>
            <person name="Moller C."/>
            <person name="Grandal M."/>
            <person name="Clark E."/>
            <person name="Mari F."/>
        </authorList>
    </citation>
    <scope>NUCLEOTIDE SEQUENCE [MRNA]</scope>
    <source>
        <tissue>Venom duct</tissue>
    </source>
</reference>
<proteinExistence type="inferred from homology"/>
<comment type="subcellular location">
    <subcellularLocation>
        <location evidence="5">Secreted</location>
    </subcellularLocation>
</comment>
<comment type="tissue specificity">
    <text evidence="5">Expressed by the venom duct.</text>
</comment>
<comment type="domain">
    <text evidence="4">The cysteine framework is III (CC-C-C-CC). Classified in the M-2 branch, since 2 residues stand between the fourth and the fifth cysteine residues.</text>
</comment>
<comment type="similarity">
    <text evidence="4">Belongs to the conotoxin M superfamily.</text>
</comment>
<evidence type="ECO:0000250" key="1">
    <source>
        <dbReference type="UniProtKB" id="P85021"/>
    </source>
</evidence>
<evidence type="ECO:0000255" key="2"/>
<evidence type="ECO:0000303" key="3">
    <source>
    </source>
</evidence>
<evidence type="ECO:0000305" key="4"/>
<evidence type="ECO:0000305" key="5">
    <source>
    </source>
</evidence>
<evidence type="ECO:0000312" key="6">
    <source>
        <dbReference type="EMBL" id="AUJ88072.1"/>
    </source>
</evidence>
<dbReference type="EMBL" id="MF588948">
    <property type="protein sequence ID" value="AUJ88072.1"/>
    <property type="molecule type" value="mRNA"/>
</dbReference>
<dbReference type="GO" id="GO:0005576">
    <property type="term" value="C:extracellular region"/>
    <property type="evidence" value="ECO:0007669"/>
    <property type="project" value="UniProtKB-SubCell"/>
</dbReference>
<dbReference type="GO" id="GO:0008200">
    <property type="term" value="F:ion channel inhibitor activity"/>
    <property type="evidence" value="ECO:0007669"/>
    <property type="project" value="InterPro"/>
</dbReference>
<dbReference type="GO" id="GO:0090729">
    <property type="term" value="F:toxin activity"/>
    <property type="evidence" value="ECO:0007669"/>
    <property type="project" value="UniProtKB-KW"/>
</dbReference>
<dbReference type="InterPro" id="IPR004214">
    <property type="entry name" value="Conotoxin"/>
</dbReference>
<dbReference type="Pfam" id="PF02950">
    <property type="entry name" value="Conotoxin"/>
    <property type="match status" value="1"/>
</dbReference>